<name>TIG_HERA2</name>
<evidence type="ECO:0000255" key="1">
    <source>
        <dbReference type="HAMAP-Rule" id="MF_00303"/>
    </source>
</evidence>
<evidence type="ECO:0000256" key="2">
    <source>
        <dbReference type="SAM" id="MobiDB-lite"/>
    </source>
</evidence>
<gene>
    <name evidence="1" type="primary">tig</name>
    <name type="ordered locus">Haur_3885</name>
</gene>
<keyword id="KW-0131">Cell cycle</keyword>
<keyword id="KW-0132">Cell division</keyword>
<keyword id="KW-0143">Chaperone</keyword>
<keyword id="KW-0963">Cytoplasm</keyword>
<keyword id="KW-0413">Isomerase</keyword>
<keyword id="KW-0697">Rotamase</keyword>
<sequence>MKVTTEQLPKRIVALEIEPDAATIEKELNKAAQRIASKVAIPGFRKGKAPRFIVENYYGKAAILEEATDEIINVAFRAALEQENIKPVAQASLEKLEPEPFRFRILVPVEPEVILPDYKAITVDLTEEPVTDATLEVALDQAREKHVVLSAPEGEPEAAEGDQLTATVQTLVDGVPLHKLDEEDDDDDDDDDDDDDDDDDDDDDDDDDDDDDDDDDDDDDDDDDDDDDDDDDEGEPTTLIMEERRIVPELYAGLKGIKAGETREISAHLPADHPDARVADKDVVFKVTVSEIQNRQLPAWEELPGLEEFEGDLDAYKADLMERLVKNSGDHHRRNVLNQYLEEVVAATSFDVPDALIAERAHELLHEQVESLARYGINMEQYLQIVGKTHDEAVQELLPRGEESLKSSLVVRKIVEAEGLSVDESEINAEIERILNDFPDAQRGPARRRLEKELRPQVAGSLLDKKLQDRLVELATGNAAA</sequence>
<proteinExistence type="inferred from homology"/>
<comment type="function">
    <text evidence="1">Involved in protein export. Acts as a chaperone by maintaining the newly synthesized protein in an open conformation. Functions as a peptidyl-prolyl cis-trans isomerase.</text>
</comment>
<comment type="catalytic activity">
    <reaction evidence="1">
        <text>[protein]-peptidylproline (omega=180) = [protein]-peptidylproline (omega=0)</text>
        <dbReference type="Rhea" id="RHEA:16237"/>
        <dbReference type="Rhea" id="RHEA-COMP:10747"/>
        <dbReference type="Rhea" id="RHEA-COMP:10748"/>
        <dbReference type="ChEBI" id="CHEBI:83833"/>
        <dbReference type="ChEBI" id="CHEBI:83834"/>
        <dbReference type="EC" id="5.2.1.8"/>
    </reaction>
</comment>
<comment type="subcellular location">
    <subcellularLocation>
        <location>Cytoplasm</location>
    </subcellularLocation>
    <text evidence="1">About half TF is bound to the ribosome near the polypeptide exit tunnel while the other half is free in the cytoplasm.</text>
</comment>
<comment type="domain">
    <text evidence="1">Consists of 3 domains; the N-terminus binds the ribosome, the middle domain has PPIase activity, while the C-terminus has intrinsic chaperone activity on its own.</text>
</comment>
<comment type="similarity">
    <text evidence="1">Belongs to the FKBP-type PPIase family. Tig subfamily.</text>
</comment>
<reference key="1">
    <citation type="journal article" date="2011" name="Stand. Genomic Sci.">
        <title>Complete genome sequence of the filamentous gliding predatory bacterium Herpetosiphon aurantiacus type strain (114-95(T)).</title>
        <authorList>
            <person name="Kiss H."/>
            <person name="Nett M."/>
            <person name="Domin N."/>
            <person name="Martin K."/>
            <person name="Maresca J.A."/>
            <person name="Copeland A."/>
            <person name="Lapidus A."/>
            <person name="Lucas S."/>
            <person name="Berry K.W."/>
            <person name="Glavina Del Rio T."/>
            <person name="Dalin E."/>
            <person name="Tice H."/>
            <person name="Pitluck S."/>
            <person name="Richardson P."/>
            <person name="Bruce D."/>
            <person name="Goodwin L."/>
            <person name="Han C."/>
            <person name="Detter J.C."/>
            <person name="Schmutz J."/>
            <person name="Brettin T."/>
            <person name="Land M."/>
            <person name="Hauser L."/>
            <person name="Kyrpides N.C."/>
            <person name="Ivanova N."/>
            <person name="Goeker M."/>
            <person name="Woyke T."/>
            <person name="Klenk H.P."/>
            <person name="Bryant D.A."/>
        </authorList>
    </citation>
    <scope>NUCLEOTIDE SEQUENCE [LARGE SCALE GENOMIC DNA]</scope>
    <source>
        <strain>ATCC 23779 / DSM 785 / 114-95</strain>
    </source>
</reference>
<dbReference type="EC" id="5.2.1.8" evidence="1"/>
<dbReference type="EMBL" id="CP000875">
    <property type="protein sequence ID" value="ABX06519.1"/>
    <property type="molecule type" value="Genomic_DNA"/>
</dbReference>
<dbReference type="SMR" id="A9AUT1"/>
<dbReference type="FunCoup" id="A9AUT1">
    <property type="interactions" value="536"/>
</dbReference>
<dbReference type="STRING" id="316274.Haur_3885"/>
<dbReference type="KEGG" id="hau:Haur_3885"/>
<dbReference type="eggNOG" id="COG0544">
    <property type="taxonomic scope" value="Bacteria"/>
</dbReference>
<dbReference type="HOGENOM" id="CLU_033058_3_1_0"/>
<dbReference type="InParanoid" id="A9AUT1"/>
<dbReference type="Proteomes" id="UP000000787">
    <property type="component" value="Chromosome"/>
</dbReference>
<dbReference type="GO" id="GO:0005737">
    <property type="term" value="C:cytoplasm"/>
    <property type="evidence" value="ECO:0007669"/>
    <property type="project" value="UniProtKB-SubCell"/>
</dbReference>
<dbReference type="GO" id="GO:0003755">
    <property type="term" value="F:peptidyl-prolyl cis-trans isomerase activity"/>
    <property type="evidence" value="ECO:0007669"/>
    <property type="project" value="UniProtKB-UniRule"/>
</dbReference>
<dbReference type="GO" id="GO:0044183">
    <property type="term" value="F:protein folding chaperone"/>
    <property type="evidence" value="ECO:0007669"/>
    <property type="project" value="TreeGrafter"/>
</dbReference>
<dbReference type="GO" id="GO:0043022">
    <property type="term" value="F:ribosome binding"/>
    <property type="evidence" value="ECO:0007669"/>
    <property type="project" value="TreeGrafter"/>
</dbReference>
<dbReference type="GO" id="GO:0051083">
    <property type="term" value="P:'de novo' cotranslational protein folding"/>
    <property type="evidence" value="ECO:0007669"/>
    <property type="project" value="TreeGrafter"/>
</dbReference>
<dbReference type="GO" id="GO:0051301">
    <property type="term" value="P:cell division"/>
    <property type="evidence" value="ECO:0007669"/>
    <property type="project" value="UniProtKB-KW"/>
</dbReference>
<dbReference type="GO" id="GO:0061077">
    <property type="term" value="P:chaperone-mediated protein folding"/>
    <property type="evidence" value="ECO:0007669"/>
    <property type="project" value="TreeGrafter"/>
</dbReference>
<dbReference type="GO" id="GO:0015031">
    <property type="term" value="P:protein transport"/>
    <property type="evidence" value="ECO:0007669"/>
    <property type="project" value="UniProtKB-UniRule"/>
</dbReference>
<dbReference type="GO" id="GO:0043335">
    <property type="term" value="P:protein unfolding"/>
    <property type="evidence" value="ECO:0007669"/>
    <property type="project" value="TreeGrafter"/>
</dbReference>
<dbReference type="Gene3D" id="3.10.50.40">
    <property type="match status" value="1"/>
</dbReference>
<dbReference type="Gene3D" id="3.30.70.1050">
    <property type="entry name" value="Trigger factor ribosome-binding domain"/>
    <property type="match status" value="1"/>
</dbReference>
<dbReference type="Gene3D" id="1.10.3120.10">
    <property type="entry name" value="Trigger factor, C-terminal domain"/>
    <property type="match status" value="1"/>
</dbReference>
<dbReference type="HAMAP" id="MF_00303">
    <property type="entry name" value="Trigger_factor_Tig"/>
    <property type="match status" value="1"/>
</dbReference>
<dbReference type="InterPro" id="IPR046357">
    <property type="entry name" value="PPIase_dom_sf"/>
</dbReference>
<dbReference type="InterPro" id="IPR005215">
    <property type="entry name" value="Trig_fac"/>
</dbReference>
<dbReference type="InterPro" id="IPR008880">
    <property type="entry name" value="Trigger_fac_C"/>
</dbReference>
<dbReference type="InterPro" id="IPR037041">
    <property type="entry name" value="Trigger_fac_C_sf"/>
</dbReference>
<dbReference type="InterPro" id="IPR008881">
    <property type="entry name" value="Trigger_fac_ribosome-bd_bac"/>
</dbReference>
<dbReference type="InterPro" id="IPR036611">
    <property type="entry name" value="Trigger_fac_ribosome-bd_sf"/>
</dbReference>
<dbReference type="InterPro" id="IPR027304">
    <property type="entry name" value="Trigger_fact/SurA_dom_sf"/>
</dbReference>
<dbReference type="PANTHER" id="PTHR30560">
    <property type="entry name" value="TRIGGER FACTOR CHAPERONE AND PEPTIDYL-PROLYL CIS/TRANS ISOMERASE"/>
    <property type="match status" value="1"/>
</dbReference>
<dbReference type="PANTHER" id="PTHR30560:SF3">
    <property type="entry name" value="TRIGGER FACTOR-LIKE PROTEIN TIG, CHLOROPLASTIC"/>
    <property type="match status" value="1"/>
</dbReference>
<dbReference type="Pfam" id="PF05698">
    <property type="entry name" value="Trigger_C"/>
    <property type="match status" value="1"/>
</dbReference>
<dbReference type="Pfam" id="PF05697">
    <property type="entry name" value="Trigger_N"/>
    <property type="match status" value="1"/>
</dbReference>
<dbReference type="PIRSF" id="PIRSF003095">
    <property type="entry name" value="Trigger_factor"/>
    <property type="match status" value="1"/>
</dbReference>
<dbReference type="SUPFAM" id="SSF54534">
    <property type="entry name" value="FKBP-like"/>
    <property type="match status" value="1"/>
</dbReference>
<dbReference type="SUPFAM" id="SSF109998">
    <property type="entry name" value="Triger factor/SurA peptide-binding domain-like"/>
    <property type="match status" value="1"/>
</dbReference>
<dbReference type="SUPFAM" id="SSF102735">
    <property type="entry name" value="Trigger factor ribosome-binding domain"/>
    <property type="match status" value="1"/>
</dbReference>
<organism>
    <name type="scientific">Herpetosiphon aurantiacus (strain ATCC 23779 / DSM 785 / 114-95)</name>
    <dbReference type="NCBI Taxonomy" id="316274"/>
    <lineage>
        <taxon>Bacteria</taxon>
        <taxon>Bacillati</taxon>
        <taxon>Chloroflexota</taxon>
        <taxon>Chloroflexia</taxon>
        <taxon>Herpetosiphonales</taxon>
        <taxon>Herpetosiphonaceae</taxon>
        <taxon>Herpetosiphon</taxon>
    </lineage>
</organism>
<protein>
    <recommendedName>
        <fullName evidence="1">Trigger factor</fullName>
        <shortName evidence="1">TF</shortName>
        <ecNumber evidence="1">5.2.1.8</ecNumber>
    </recommendedName>
    <alternativeName>
        <fullName evidence="1">PPIase</fullName>
    </alternativeName>
</protein>
<accession>A9AUT1</accession>
<feature type="chain" id="PRO_1000115543" description="Trigger factor">
    <location>
        <begin position="1"/>
        <end position="481"/>
    </location>
</feature>
<feature type="domain" description="PPIase FKBP-type" evidence="1">
    <location>
        <begin position="161"/>
        <end position="298"/>
    </location>
</feature>
<feature type="region of interest" description="Disordered" evidence="2">
    <location>
        <begin position="173"/>
        <end position="245"/>
    </location>
</feature>
<feature type="compositionally biased region" description="Acidic residues" evidence="2">
    <location>
        <begin position="182"/>
        <end position="235"/>
    </location>
</feature>